<sequence length="412" mass="42512">MSVANLKDLLAEGVSGRGVLVRSDLNVPLDEDGTITDAGRIIASAPTLKALLDADAKVVVAAHLGRPKDGPDPTLSLAPVAVALGEQLGRHVQLAGDVVGADALARAEGLTGGDILLLENIRFDKRETSKNDDDRRALAKQLVELVGTGGVFVSDGFGVVHRKQASVYDIATLLPHYAGTLVADEMRVLEQLTSSTQRPYAVVLGGSKVSDKLGVIESLATKADSIVIGGGMCFTFLAAQGFSVGTSLLEDDMIEVCRGLLETYHDVLRLPVDLVVTEKFAADSPPQTVDVGAVPNGLMGLDIGPGSIKRFSTLLSNAGTIFWNGPMGVFEFPAYAAGTRGVAEAIVAATGKGAFSVVGGGDSAAAVRAMNIPEGAFSHISTGGGASLEYLEGKTLPGIEVLSREQPTGGVL</sequence>
<comment type="catalytic activity">
    <reaction evidence="1">
        <text>(2R)-3-phosphoglycerate + ATP = (2R)-3-phospho-glyceroyl phosphate + ADP</text>
        <dbReference type="Rhea" id="RHEA:14801"/>
        <dbReference type="ChEBI" id="CHEBI:30616"/>
        <dbReference type="ChEBI" id="CHEBI:57604"/>
        <dbReference type="ChEBI" id="CHEBI:58272"/>
        <dbReference type="ChEBI" id="CHEBI:456216"/>
        <dbReference type="EC" id="2.7.2.3"/>
    </reaction>
</comment>
<comment type="pathway">
    <text evidence="1">Carbohydrate degradation; glycolysis; pyruvate from D-glyceraldehyde 3-phosphate: step 2/5.</text>
</comment>
<comment type="subunit">
    <text evidence="1">Monomer.</text>
</comment>
<comment type="subcellular location">
    <subcellularLocation>
        <location evidence="1">Cytoplasm</location>
    </subcellularLocation>
</comment>
<comment type="similarity">
    <text evidence="1">Belongs to the phosphoglycerate kinase family.</text>
</comment>
<gene>
    <name evidence="1" type="primary">pgk</name>
    <name type="ordered locus">MRA_1445</name>
</gene>
<evidence type="ECO:0000255" key="1">
    <source>
        <dbReference type="HAMAP-Rule" id="MF_00145"/>
    </source>
</evidence>
<accession>A5U2D9</accession>
<dbReference type="EC" id="2.7.2.3" evidence="1"/>
<dbReference type="EMBL" id="CP000611">
    <property type="protein sequence ID" value="ABQ73189.1"/>
    <property type="molecule type" value="Genomic_DNA"/>
</dbReference>
<dbReference type="RefSeq" id="WP_003900339.1">
    <property type="nucleotide sequence ID" value="NZ_CP016972.1"/>
</dbReference>
<dbReference type="SMR" id="A5U2D9"/>
<dbReference type="KEGG" id="mra:MRA_1445"/>
<dbReference type="eggNOG" id="COG0126">
    <property type="taxonomic scope" value="Bacteria"/>
</dbReference>
<dbReference type="HOGENOM" id="CLU_025427_0_2_11"/>
<dbReference type="UniPathway" id="UPA00109">
    <property type="reaction ID" value="UER00185"/>
</dbReference>
<dbReference type="Proteomes" id="UP000001988">
    <property type="component" value="Chromosome"/>
</dbReference>
<dbReference type="GO" id="GO:0005829">
    <property type="term" value="C:cytosol"/>
    <property type="evidence" value="ECO:0007669"/>
    <property type="project" value="TreeGrafter"/>
</dbReference>
<dbReference type="GO" id="GO:0043531">
    <property type="term" value="F:ADP binding"/>
    <property type="evidence" value="ECO:0007669"/>
    <property type="project" value="TreeGrafter"/>
</dbReference>
<dbReference type="GO" id="GO:0005524">
    <property type="term" value="F:ATP binding"/>
    <property type="evidence" value="ECO:0007669"/>
    <property type="project" value="UniProtKB-KW"/>
</dbReference>
<dbReference type="GO" id="GO:0004618">
    <property type="term" value="F:phosphoglycerate kinase activity"/>
    <property type="evidence" value="ECO:0007669"/>
    <property type="project" value="UniProtKB-UniRule"/>
</dbReference>
<dbReference type="GO" id="GO:0006094">
    <property type="term" value="P:gluconeogenesis"/>
    <property type="evidence" value="ECO:0007669"/>
    <property type="project" value="TreeGrafter"/>
</dbReference>
<dbReference type="GO" id="GO:0006096">
    <property type="term" value="P:glycolytic process"/>
    <property type="evidence" value="ECO:0007669"/>
    <property type="project" value="UniProtKB-UniRule"/>
</dbReference>
<dbReference type="CDD" id="cd00318">
    <property type="entry name" value="Phosphoglycerate_kinase"/>
    <property type="match status" value="1"/>
</dbReference>
<dbReference type="FunFam" id="3.40.50.1260:FF:000006">
    <property type="entry name" value="Phosphoglycerate kinase"/>
    <property type="match status" value="1"/>
</dbReference>
<dbReference type="FunFam" id="3.40.50.1260:FF:000031">
    <property type="entry name" value="Phosphoglycerate kinase 1"/>
    <property type="match status" value="1"/>
</dbReference>
<dbReference type="Gene3D" id="3.40.50.1260">
    <property type="entry name" value="Phosphoglycerate kinase, N-terminal domain"/>
    <property type="match status" value="2"/>
</dbReference>
<dbReference type="HAMAP" id="MF_00145">
    <property type="entry name" value="Phosphoglyc_kinase"/>
    <property type="match status" value="1"/>
</dbReference>
<dbReference type="InterPro" id="IPR001576">
    <property type="entry name" value="Phosphoglycerate_kinase"/>
</dbReference>
<dbReference type="InterPro" id="IPR015911">
    <property type="entry name" value="Phosphoglycerate_kinase_CS"/>
</dbReference>
<dbReference type="InterPro" id="IPR015824">
    <property type="entry name" value="Phosphoglycerate_kinase_N"/>
</dbReference>
<dbReference type="InterPro" id="IPR036043">
    <property type="entry name" value="Phosphoglycerate_kinase_sf"/>
</dbReference>
<dbReference type="PANTHER" id="PTHR11406">
    <property type="entry name" value="PHOSPHOGLYCERATE KINASE"/>
    <property type="match status" value="1"/>
</dbReference>
<dbReference type="PANTHER" id="PTHR11406:SF23">
    <property type="entry name" value="PHOSPHOGLYCERATE KINASE 1, CHLOROPLASTIC-RELATED"/>
    <property type="match status" value="1"/>
</dbReference>
<dbReference type="Pfam" id="PF00162">
    <property type="entry name" value="PGK"/>
    <property type="match status" value="1"/>
</dbReference>
<dbReference type="PIRSF" id="PIRSF000724">
    <property type="entry name" value="Pgk"/>
    <property type="match status" value="1"/>
</dbReference>
<dbReference type="PRINTS" id="PR00477">
    <property type="entry name" value="PHGLYCKINASE"/>
</dbReference>
<dbReference type="SUPFAM" id="SSF53748">
    <property type="entry name" value="Phosphoglycerate kinase"/>
    <property type="match status" value="1"/>
</dbReference>
<dbReference type="PROSITE" id="PS00111">
    <property type="entry name" value="PGLYCERATE_KINASE"/>
    <property type="match status" value="1"/>
</dbReference>
<reference key="1">
    <citation type="journal article" date="2008" name="PLoS ONE">
        <title>Genetic basis of virulence attenuation revealed by comparative genomic analysis of Mycobacterium tuberculosis strain H37Ra versus H37Rv.</title>
        <authorList>
            <person name="Zheng H."/>
            <person name="Lu L."/>
            <person name="Wang B."/>
            <person name="Pu S."/>
            <person name="Zhang X."/>
            <person name="Zhu G."/>
            <person name="Shi W."/>
            <person name="Zhang L."/>
            <person name="Wang H."/>
            <person name="Wang S."/>
            <person name="Zhao G."/>
            <person name="Zhang Y."/>
        </authorList>
    </citation>
    <scope>NUCLEOTIDE SEQUENCE [LARGE SCALE GENOMIC DNA]</scope>
    <source>
        <strain>ATCC 25177 / H37Ra</strain>
    </source>
</reference>
<feature type="chain" id="PRO_1000009635" description="Phosphoglycerate kinase">
    <location>
        <begin position="1"/>
        <end position="412"/>
    </location>
</feature>
<feature type="binding site" evidence="1">
    <location>
        <begin position="24"/>
        <end position="26"/>
    </location>
    <ligand>
        <name>substrate</name>
    </ligand>
</feature>
<feature type="binding site" evidence="1">
    <location>
        <position position="40"/>
    </location>
    <ligand>
        <name>substrate</name>
    </ligand>
</feature>
<feature type="binding site" evidence="1">
    <location>
        <begin position="63"/>
        <end position="66"/>
    </location>
    <ligand>
        <name>substrate</name>
    </ligand>
</feature>
<feature type="binding site" evidence="1">
    <location>
        <position position="122"/>
    </location>
    <ligand>
        <name>substrate</name>
    </ligand>
</feature>
<feature type="binding site" evidence="1">
    <location>
        <position position="162"/>
    </location>
    <ligand>
        <name>substrate</name>
    </ligand>
</feature>
<feature type="binding site" evidence="1">
    <location>
        <position position="212"/>
    </location>
    <ligand>
        <name>ATP</name>
        <dbReference type="ChEBI" id="CHEBI:30616"/>
    </ligand>
</feature>
<feature type="binding site" evidence="1">
    <location>
        <position position="300"/>
    </location>
    <ligand>
        <name>ATP</name>
        <dbReference type="ChEBI" id="CHEBI:30616"/>
    </ligand>
</feature>
<feature type="binding site" evidence="1">
    <location>
        <position position="331"/>
    </location>
    <ligand>
        <name>ATP</name>
        <dbReference type="ChEBI" id="CHEBI:30616"/>
    </ligand>
</feature>
<feature type="binding site" evidence="1">
    <location>
        <begin position="360"/>
        <end position="363"/>
    </location>
    <ligand>
        <name>ATP</name>
        <dbReference type="ChEBI" id="CHEBI:30616"/>
    </ligand>
</feature>
<keyword id="KW-0067">ATP-binding</keyword>
<keyword id="KW-0963">Cytoplasm</keyword>
<keyword id="KW-0324">Glycolysis</keyword>
<keyword id="KW-0418">Kinase</keyword>
<keyword id="KW-0547">Nucleotide-binding</keyword>
<keyword id="KW-1185">Reference proteome</keyword>
<keyword id="KW-0808">Transferase</keyword>
<organism>
    <name type="scientific">Mycobacterium tuberculosis (strain ATCC 25177 / H37Ra)</name>
    <dbReference type="NCBI Taxonomy" id="419947"/>
    <lineage>
        <taxon>Bacteria</taxon>
        <taxon>Bacillati</taxon>
        <taxon>Actinomycetota</taxon>
        <taxon>Actinomycetes</taxon>
        <taxon>Mycobacteriales</taxon>
        <taxon>Mycobacteriaceae</taxon>
        <taxon>Mycobacterium</taxon>
        <taxon>Mycobacterium tuberculosis complex</taxon>
    </lineage>
</organism>
<protein>
    <recommendedName>
        <fullName evidence="1">Phosphoglycerate kinase</fullName>
        <ecNumber evidence="1">2.7.2.3</ecNumber>
    </recommendedName>
</protein>
<name>PGK_MYCTA</name>
<proteinExistence type="inferred from homology"/>